<gene>
    <name evidence="1" type="primary">guaA</name>
    <name type="ordered locus">Sputw3181_1362</name>
</gene>
<accession>A1RHR0</accession>
<proteinExistence type="inferred from homology"/>
<keyword id="KW-0067">ATP-binding</keyword>
<keyword id="KW-0315">Glutamine amidotransferase</keyword>
<keyword id="KW-0332">GMP biosynthesis</keyword>
<keyword id="KW-0436">Ligase</keyword>
<keyword id="KW-0547">Nucleotide-binding</keyword>
<keyword id="KW-0658">Purine biosynthesis</keyword>
<name>GUAA_SHESW</name>
<protein>
    <recommendedName>
        <fullName evidence="1">GMP synthase [glutamine-hydrolyzing]</fullName>
        <ecNumber evidence="1">6.3.5.2</ecNumber>
    </recommendedName>
    <alternativeName>
        <fullName evidence="1">GMP synthetase</fullName>
    </alternativeName>
    <alternativeName>
        <fullName evidence="1">Glutamine amidotransferase</fullName>
    </alternativeName>
</protein>
<feature type="chain" id="PRO_1000120412" description="GMP synthase [glutamine-hydrolyzing]">
    <location>
        <begin position="1"/>
        <end position="525"/>
    </location>
</feature>
<feature type="domain" description="Glutamine amidotransferase type-1" evidence="1">
    <location>
        <begin position="8"/>
        <end position="207"/>
    </location>
</feature>
<feature type="domain" description="GMPS ATP-PPase" evidence="1">
    <location>
        <begin position="208"/>
        <end position="400"/>
    </location>
</feature>
<feature type="active site" description="Nucleophile" evidence="1">
    <location>
        <position position="85"/>
    </location>
</feature>
<feature type="active site" evidence="1">
    <location>
        <position position="181"/>
    </location>
</feature>
<feature type="active site" evidence="1">
    <location>
        <position position="183"/>
    </location>
</feature>
<feature type="binding site" evidence="1">
    <location>
        <begin position="235"/>
        <end position="241"/>
    </location>
    <ligand>
        <name>ATP</name>
        <dbReference type="ChEBI" id="CHEBI:30616"/>
    </ligand>
</feature>
<dbReference type="EC" id="6.3.5.2" evidence="1"/>
<dbReference type="EMBL" id="CP000503">
    <property type="protein sequence ID" value="ABM24205.1"/>
    <property type="molecule type" value="Genomic_DNA"/>
</dbReference>
<dbReference type="RefSeq" id="WP_011788711.1">
    <property type="nucleotide sequence ID" value="NC_008750.1"/>
</dbReference>
<dbReference type="SMR" id="A1RHR0"/>
<dbReference type="MEROPS" id="C26.A07"/>
<dbReference type="KEGG" id="shw:Sputw3181_1362"/>
<dbReference type="HOGENOM" id="CLU_014340_0_5_6"/>
<dbReference type="UniPathway" id="UPA00189">
    <property type="reaction ID" value="UER00296"/>
</dbReference>
<dbReference type="Proteomes" id="UP000002597">
    <property type="component" value="Chromosome"/>
</dbReference>
<dbReference type="GO" id="GO:0005829">
    <property type="term" value="C:cytosol"/>
    <property type="evidence" value="ECO:0007669"/>
    <property type="project" value="TreeGrafter"/>
</dbReference>
<dbReference type="GO" id="GO:0005524">
    <property type="term" value="F:ATP binding"/>
    <property type="evidence" value="ECO:0007669"/>
    <property type="project" value="UniProtKB-UniRule"/>
</dbReference>
<dbReference type="GO" id="GO:0003921">
    <property type="term" value="F:GMP synthase activity"/>
    <property type="evidence" value="ECO:0007669"/>
    <property type="project" value="InterPro"/>
</dbReference>
<dbReference type="CDD" id="cd01742">
    <property type="entry name" value="GATase1_GMP_Synthase"/>
    <property type="match status" value="1"/>
</dbReference>
<dbReference type="CDD" id="cd01997">
    <property type="entry name" value="GMP_synthase_C"/>
    <property type="match status" value="1"/>
</dbReference>
<dbReference type="FunFam" id="3.30.300.10:FF:000002">
    <property type="entry name" value="GMP synthase [glutamine-hydrolyzing]"/>
    <property type="match status" value="1"/>
</dbReference>
<dbReference type="FunFam" id="3.40.50.620:FF:000001">
    <property type="entry name" value="GMP synthase [glutamine-hydrolyzing]"/>
    <property type="match status" value="1"/>
</dbReference>
<dbReference type="FunFam" id="3.40.50.880:FF:000001">
    <property type="entry name" value="GMP synthase [glutamine-hydrolyzing]"/>
    <property type="match status" value="1"/>
</dbReference>
<dbReference type="Gene3D" id="3.30.300.10">
    <property type="match status" value="1"/>
</dbReference>
<dbReference type="Gene3D" id="3.40.50.880">
    <property type="match status" value="1"/>
</dbReference>
<dbReference type="Gene3D" id="3.40.50.620">
    <property type="entry name" value="HUPs"/>
    <property type="match status" value="1"/>
</dbReference>
<dbReference type="HAMAP" id="MF_00344">
    <property type="entry name" value="GMP_synthase"/>
    <property type="match status" value="1"/>
</dbReference>
<dbReference type="InterPro" id="IPR029062">
    <property type="entry name" value="Class_I_gatase-like"/>
</dbReference>
<dbReference type="InterPro" id="IPR017926">
    <property type="entry name" value="GATASE"/>
</dbReference>
<dbReference type="InterPro" id="IPR001674">
    <property type="entry name" value="GMP_synth_C"/>
</dbReference>
<dbReference type="InterPro" id="IPR004739">
    <property type="entry name" value="GMP_synth_GATase"/>
</dbReference>
<dbReference type="InterPro" id="IPR022955">
    <property type="entry name" value="GMP_synthase"/>
</dbReference>
<dbReference type="InterPro" id="IPR025777">
    <property type="entry name" value="GMPS_ATP_PPase_dom"/>
</dbReference>
<dbReference type="InterPro" id="IPR022310">
    <property type="entry name" value="NAD/GMP_synthase"/>
</dbReference>
<dbReference type="InterPro" id="IPR014729">
    <property type="entry name" value="Rossmann-like_a/b/a_fold"/>
</dbReference>
<dbReference type="NCBIfam" id="TIGR00884">
    <property type="entry name" value="guaA_Cterm"/>
    <property type="match status" value="1"/>
</dbReference>
<dbReference type="NCBIfam" id="TIGR00888">
    <property type="entry name" value="guaA_Nterm"/>
    <property type="match status" value="1"/>
</dbReference>
<dbReference type="NCBIfam" id="NF000848">
    <property type="entry name" value="PRK00074.1"/>
    <property type="match status" value="1"/>
</dbReference>
<dbReference type="PANTHER" id="PTHR11922:SF2">
    <property type="entry name" value="GMP SYNTHASE [GLUTAMINE-HYDROLYZING]"/>
    <property type="match status" value="1"/>
</dbReference>
<dbReference type="PANTHER" id="PTHR11922">
    <property type="entry name" value="GMP SYNTHASE-RELATED"/>
    <property type="match status" value="1"/>
</dbReference>
<dbReference type="Pfam" id="PF00117">
    <property type="entry name" value="GATase"/>
    <property type="match status" value="1"/>
</dbReference>
<dbReference type="Pfam" id="PF00958">
    <property type="entry name" value="GMP_synt_C"/>
    <property type="match status" value="1"/>
</dbReference>
<dbReference type="Pfam" id="PF02540">
    <property type="entry name" value="NAD_synthase"/>
    <property type="match status" value="1"/>
</dbReference>
<dbReference type="PRINTS" id="PR00097">
    <property type="entry name" value="ANTSNTHASEII"/>
</dbReference>
<dbReference type="PRINTS" id="PR00099">
    <property type="entry name" value="CPSGATASE"/>
</dbReference>
<dbReference type="PRINTS" id="PR00096">
    <property type="entry name" value="GATASE"/>
</dbReference>
<dbReference type="SUPFAM" id="SSF52402">
    <property type="entry name" value="Adenine nucleotide alpha hydrolases-like"/>
    <property type="match status" value="1"/>
</dbReference>
<dbReference type="SUPFAM" id="SSF52317">
    <property type="entry name" value="Class I glutamine amidotransferase-like"/>
    <property type="match status" value="1"/>
</dbReference>
<dbReference type="SUPFAM" id="SSF54810">
    <property type="entry name" value="GMP synthetase C-terminal dimerisation domain"/>
    <property type="match status" value="1"/>
</dbReference>
<dbReference type="PROSITE" id="PS51273">
    <property type="entry name" value="GATASE_TYPE_1"/>
    <property type="match status" value="1"/>
</dbReference>
<dbReference type="PROSITE" id="PS51553">
    <property type="entry name" value="GMPS_ATP_PPASE"/>
    <property type="match status" value="1"/>
</dbReference>
<evidence type="ECO:0000255" key="1">
    <source>
        <dbReference type="HAMAP-Rule" id="MF_00344"/>
    </source>
</evidence>
<sequence length="525" mass="58192">MSDIHEHKILILDFGSQYTQLIARRIREIGVYCELWAWDVTEAQIREFAPNGIILAGGPESVTAENSPRAPEYVFNAGIPVLGICYGMQTMSEQLGGKVIQGVGEGEFGYAQIEMLTKSALFKDIEDAVNSEGKPLLDVWMSHGDKVSAIPEGFVAVAKTDTCPFAAMANEEKRFYGVQFHPEVTHTRQGMRMLSHFALDICGCAANWKPSSIIEDAIERLKKQIGDDEVILGLSGGVDSSVVAMLLHRAIGKKLTCVFVDNGLLRLNEAAQVMEMFGDHFGLNIIHVDAENRFLDAMKGVADPEAKRKIIGRVFVEIFDEESKKCANAKWLAQGTIYPDVIESAGSATGKAHVIKSHHNVGGLPDDMALGLVEPLRELFKDEVRKIGLELGLPYNMLYRHPFPGPGLGVRVLGEVKKEYCDLLRRADAIFIEELHKADLYNKVSQAFTVFLPVRSVGVMGDGRKYDWVVSLRAVETIDFMTAHWAHLPYDFLGRVSNRIINEVDGISRVVYDISGKPPATIEWE</sequence>
<organism>
    <name type="scientific">Shewanella sp. (strain W3-18-1)</name>
    <dbReference type="NCBI Taxonomy" id="351745"/>
    <lineage>
        <taxon>Bacteria</taxon>
        <taxon>Pseudomonadati</taxon>
        <taxon>Pseudomonadota</taxon>
        <taxon>Gammaproteobacteria</taxon>
        <taxon>Alteromonadales</taxon>
        <taxon>Shewanellaceae</taxon>
        <taxon>Shewanella</taxon>
    </lineage>
</organism>
<reference key="1">
    <citation type="submission" date="2006-12" db="EMBL/GenBank/DDBJ databases">
        <title>Complete sequence of Shewanella sp. W3-18-1.</title>
        <authorList>
            <consortium name="US DOE Joint Genome Institute"/>
            <person name="Copeland A."/>
            <person name="Lucas S."/>
            <person name="Lapidus A."/>
            <person name="Barry K."/>
            <person name="Detter J.C."/>
            <person name="Glavina del Rio T."/>
            <person name="Hammon N."/>
            <person name="Israni S."/>
            <person name="Dalin E."/>
            <person name="Tice H."/>
            <person name="Pitluck S."/>
            <person name="Chain P."/>
            <person name="Malfatti S."/>
            <person name="Shin M."/>
            <person name="Vergez L."/>
            <person name="Schmutz J."/>
            <person name="Larimer F."/>
            <person name="Land M."/>
            <person name="Hauser L."/>
            <person name="Kyrpides N."/>
            <person name="Lykidis A."/>
            <person name="Tiedje J."/>
            <person name="Richardson P."/>
        </authorList>
    </citation>
    <scope>NUCLEOTIDE SEQUENCE [LARGE SCALE GENOMIC DNA]</scope>
    <source>
        <strain>W3-18-1</strain>
    </source>
</reference>
<comment type="function">
    <text evidence="1">Catalyzes the synthesis of GMP from XMP.</text>
</comment>
<comment type="catalytic activity">
    <reaction evidence="1">
        <text>XMP + L-glutamine + ATP + H2O = GMP + L-glutamate + AMP + diphosphate + 2 H(+)</text>
        <dbReference type="Rhea" id="RHEA:11680"/>
        <dbReference type="ChEBI" id="CHEBI:15377"/>
        <dbReference type="ChEBI" id="CHEBI:15378"/>
        <dbReference type="ChEBI" id="CHEBI:29985"/>
        <dbReference type="ChEBI" id="CHEBI:30616"/>
        <dbReference type="ChEBI" id="CHEBI:33019"/>
        <dbReference type="ChEBI" id="CHEBI:57464"/>
        <dbReference type="ChEBI" id="CHEBI:58115"/>
        <dbReference type="ChEBI" id="CHEBI:58359"/>
        <dbReference type="ChEBI" id="CHEBI:456215"/>
        <dbReference type="EC" id="6.3.5.2"/>
    </reaction>
</comment>
<comment type="pathway">
    <text evidence="1">Purine metabolism; GMP biosynthesis; GMP from XMP (L-Gln route): step 1/1.</text>
</comment>
<comment type="subunit">
    <text evidence="1">Homodimer.</text>
</comment>